<gene>
    <name type="primary">cdhR</name>
    <name type="ordered locus">PA5389</name>
</gene>
<dbReference type="EMBL" id="AE004091">
    <property type="protein sequence ID" value="AAG08774.1"/>
    <property type="molecule type" value="Genomic_DNA"/>
</dbReference>
<dbReference type="PIR" id="A82973">
    <property type="entry name" value="A82973"/>
</dbReference>
<dbReference type="RefSeq" id="NP_254076.1">
    <property type="nucleotide sequence ID" value="NC_002516.2"/>
</dbReference>
<dbReference type="RefSeq" id="WP_003114442.1">
    <property type="nucleotide sequence ID" value="NZ_QZGE01000031.1"/>
</dbReference>
<dbReference type="SMR" id="Q9HTH5"/>
<dbReference type="FunCoup" id="Q9HTH5">
    <property type="interactions" value="27"/>
</dbReference>
<dbReference type="STRING" id="208964.PA5389"/>
<dbReference type="PaxDb" id="208964-PA5389"/>
<dbReference type="GeneID" id="880749"/>
<dbReference type="KEGG" id="pae:PA5389"/>
<dbReference type="PATRIC" id="fig|208964.12.peg.5649"/>
<dbReference type="PseudoCAP" id="PA5389"/>
<dbReference type="HOGENOM" id="CLU_000445_59_0_6"/>
<dbReference type="InParanoid" id="Q9HTH5"/>
<dbReference type="OrthoDB" id="9803764at2"/>
<dbReference type="PhylomeDB" id="Q9HTH5"/>
<dbReference type="BioCyc" id="PAER208964:G1FZ6-5516-MONOMER"/>
<dbReference type="Proteomes" id="UP000002438">
    <property type="component" value="Chromosome"/>
</dbReference>
<dbReference type="GO" id="GO:0003700">
    <property type="term" value="F:DNA-binding transcription factor activity"/>
    <property type="evidence" value="ECO:0007669"/>
    <property type="project" value="InterPro"/>
</dbReference>
<dbReference type="GO" id="GO:0043565">
    <property type="term" value="F:sequence-specific DNA binding"/>
    <property type="evidence" value="ECO:0007669"/>
    <property type="project" value="InterPro"/>
</dbReference>
<dbReference type="GO" id="GO:0009896">
    <property type="term" value="P:positive regulation of catabolic process"/>
    <property type="evidence" value="ECO:0000315"/>
    <property type="project" value="PseudoCAP"/>
</dbReference>
<dbReference type="GO" id="GO:0006355">
    <property type="term" value="P:regulation of DNA-templated transcription"/>
    <property type="evidence" value="ECO:0000315"/>
    <property type="project" value="PseudoCAP"/>
</dbReference>
<dbReference type="CDD" id="cd03136">
    <property type="entry name" value="GATase1_AraC_ArgR_like"/>
    <property type="match status" value="1"/>
</dbReference>
<dbReference type="FunFam" id="1.10.10.60:FF:000090">
    <property type="entry name" value="Transcriptional regulator ArgR, AraC family"/>
    <property type="match status" value="1"/>
</dbReference>
<dbReference type="Gene3D" id="3.40.50.880">
    <property type="match status" value="1"/>
</dbReference>
<dbReference type="Gene3D" id="1.10.10.60">
    <property type="entry name" value="Homeodomain-like"/>
    <property type="match status" value="1"/>
</dbReference>
<dbReference type="InterPro" id="IPR029062">
    <property type="entry name" value="Class_I_gatase-like"/>
</dbReference>
<dbReference type="InterPro" id="IPR002818">
    <property type="entry name" value="DJ-1/PfpI"/>
</dbReference>
<dbReference type="InterPro" id="IPR009057">
    <property type="entry name" value="Homeodomain-like_sf"/>
</dbReference>
<dbReference type="InterPro" id="IPR018060">
    <property type="entry name" value="HTH_AraC"/>
</dbReference>
<dbReference type="InterPro" id="IPR018062">
    <property type="entry name" value="HTH_AraC-typ_CS"/>
</dbReference>
<dbReference type="InterPro" id="IPR052158">
    <property type="entry name" value="INH-QAR"/>
</dbReference>
<dbReference type="PANTHER" id="PTHR43130">
    <property type="entry name" value="ARAC-FAMILY TRANSCRIPTIONAL REGULATOR"/>
    <property type="match status" value="1"/>
</dbReference>
<dbReference type="PANTHER" id="PTHR43130:SF3">
    <property type="entry name" value="HTH-TYPE TRANSCRIPTIONAL REGULATOR RV1931C"/>
    <property type="match status" value="1"/>
</dbReference>
<dbReference type="Pfam" id="PF01965">
    <property type="entry name" value="DJ-1_PfpI"/>
    <property type="match status" value="1"/>
</dbReference>
<dbReference type="Pfam" id="PF12833">
    <property type="entry name" value="HTH_18"/>
    <property type="match status" value="1"/>
</dbReference>
<dbReference type="SMART" id="SM00342">
    <property type="entry name" value="HTH_ARAC"/>
    <property type="match status" value="1"/>
</dbReference>
<dbReference type="SUPFAM" id="SSF52317">
    <property type="entry name" value="Class I glutamine amidotransferase-like"/>
    <property type="match status" value="1"/>
</dbReference>
<dbReference type="SUPFAM" id="SSF46689">
    <property type="entry name" value="Homeodomain-like"/>
    <property type="match status" value="1"/>
</dbReference>
<dbReference type="PROSITE" id="PS00041">
    <property type="entry name" value="HTH_ARAC_FAMILY_1"/>
    <property type="match status" value="1"/>
</dbReference>
<dbReference type="PROSITE" id="PS01124">
    <property type="entry name" value="HTH_ARAC_FAMILY_2"/>
    <property type="match status" value="1"/>
</dbReference>
<reference key="1">
    <citation type="journal article" date="2000" name="Nature">
        <title>Complete genome sequence of Pseudomonas aeruginosa PAO1, an opportunistic pathogen.</title>
        <authorList>
            <person name="Stover C.K."/>
            <person name="Pham X.-Q.T."/>
            <person name="Erwin A.L."/>
            <person name="Mizoguchi S.D."/>
            <person name="Warrener P."/>
            <person name="Hickey M.J."/>
            <person name="Brinkman F.S.L."/>
            <person name="Hufnagle W.O."/>
            <person name="Kowalik D.J."/>
            <person name="Lagrou M."/>
            <person name="Garber R.L."/>
            <person name="Goltry L."/>
            <person name="Tolentino E."/>
            <person name="Westbrock-Wadman S."/>
            <person name="Yuan Y."/>
            <person name="Brody L.L."/>
            <person name="Coulter S.N."/>
            <person name="Folger K.R."/>
            <person name="Kas A."/>
            <person name="Larbig K."/>
            <person name="Lim R.M."/>
            <person name="Smith K.A."/>
            <person name="Spencer D.H."/>
            <person name="Wong G.K.-S."/>
            <person name="Wu Z."/>
            <person name="Paulsen I.T."/>
            <person name="Reizer J."/>
            <person name="Saier M.H. Jr."/>
            <person name="Hancock R.E.W."/>
            <person name="Lory S."/>
            <person name="Olson M.V."/>
        </authorList>
    </citation>
    <scope>NUCLEOTIDE SEQUENCE [LARGE SCALE GENOMIC DNA]</scope>
    <source>
        <strain>ATCC 15692 / DSM 22644 / CIP 104116 / JCM 14847 / LMG 12228 / 1C / PRS 101 / PAO1</strain>
    </source>
</reference>
<reference key="2">
    <citation type="journal article" date="2009" name="Microbiology">
        <title>Identification of genes required for Pseudomonas aeruginosa carnitine catabolism.</title>
        <authorList>
            <person name="Wargo M.J."/>
            <person name="Hogan D.A."/>
        </authorList>
    </citation>
    <scope>FUNCTION AS A TRANSCRIPTIONAL REGULATOR</scope>
    <scope>ROLE IN CARNITINE CATABOLISM</scope>
    <scope>DISRUPTION PHENOTYPE</scope>
    <source>
        <strain>ATCC 15692 / DSM 22644 / CIP 104116 / JCM 14847 / LMG 12228 / 1C / PRS 101 / PAO1</strain>
    </source>
</reference>
<keyword id="KW-0010">Activator</keyword>
<keyword id="KW-0238">DNA-binding</keyword>
<keyword id="KW-1185">Reference proteome</keyword>
<keyword id="KW-0804">Transcription</keyword>
<keyword id="KW-0805">Transcription regulation</keyword>
<feature type="chain" id="PRO_0000417912" description="HTH-type transcriptional regulator CdhR">
    <location>
        <begin position="1"/>
        <end position="336"/>
    </location>
</feature>
<feature type="domain" description="HTH araC/xylS-type" evidence="1">
    <location>
        <begin position="213"/>
        <end position="311"/>
    </location>
</feature>
<feature type="DNA-binding region" description="H-T-H motif" evidence="1">
    <location>
        <begin position="230"/>
        <end position="251"/>
    </location>
</feature>
<feature type="DNA-binding region" description="H-T-H motif" evidence="1">
    <location>
        <begin position="278"/>
        <end position="301"/>
    </location>
</feature>
<feature type="region of interest" description="Disordered" evidence="2">
    <location>
        <begin position="305"/>
        <end position="336"/>
    </location>
</feature>
<accession>Q9HTH5</accession>
<proteinExistence type="evidence at protein level"/>
<organism>
    <name type="scientific">Pseudomonas aeruginosa (strain ATCC 15692 / DSM 22644 / CIP 104116 / JCM 14847 / LMG 12228 / 1C / PRS 101 / PAO1)</name>
    <dbReference type="NCBI Taxonomy" id="208964"/>
    <lineage>
        <taxon>Bacteria</taxon>
        <taxon>Pseudomonadati</taxon>
        <taxon>Pseudomonadota</taxon>
        <taxon>Gammaproteobacteria</taxon>
        <taxon>Pseudomonadales</taxon>
        <taxon>Pseudomonadaceae</taxon>
        <taxon>Pseudomonas</taxon>
    </lineage>
</organism>
<sequence length="336" mass="37078">MSQDFWFLLLPGFSVMGFVSAVEPLRVANRFHADLYRWHVLSADGGPVLASNGMSVNSDGALEPLKKGDLLFVVAGFEPLRAVTPALVQWLRKLDRNGVTLGGIDTGSVVLAEAGLLDGRRATLHWEAIDAFQESYPQLSVTQELFEIDGPRITSAGGTASIDLMLDLIAQAHGPQLAVQVSEQFVLGRIRPRQDHQRLQVATRYGVSNRKLVQVIGEMERHTEPPLTTLELAERIQVTRRQLERLFRVHLDDTPSNFYLGLRLDKARQLLRQTDLSVLQVSLACGFESPSYFSRSYRARFAASPSQDRAVLPLKAPAATPPGAPAGHRTPRAERG</sequence>
<protein>
    <recommendedName>
        <fullName>HTH-type transcriptional regulator CdhR</fullName>
    </recommendedName>
    <alternativeName>
        <fullName>Carnitine catabolism transcriptional activator</fullName>
    </alternativeName>
</protein>
<evidence type="ECO:0000255" key="1">
    <source>
        <dbReference type="PROSITE-ProRule" id="PRU00593"/>
    </source>
</evidence>
<evidence type="ECO:0000256" key="2">
    <source>
        <dbReference type="SAM" id="MobiDB-lite"/>
    </source>
</evidence>
<evidence type="ECO:0000269" key="3">
    <source>
    </source>
</evidence>
<comment type="function">
    <text evidence="3">Induces the transcription of the PA5384-PA5388 operon in response to carnitine. This operon is involved in the degradation of L-carnitine, and allows P.aeruginosa to grow on L-carnitine as the sole source of carbon and nitrogen.</text>
</comment>
<comment type="disruption phenotype">
    <text evidence="3">Cells are incapable of growth on carnitine.</text>
</comment>
<name>CDHR_PSEAE</name>